<proteinExistence type="inferred from homology"/>
<organism>
    <name type="scientific">Pseudomonas putida (strain GB-1)</name>
    <dbReference type="NCBI Taxonomy" id="76869"/>
    <lineage>
        <taxon>Bacteria</taxon>
        <taxon>Pseudomonadati</taxon>
        <taxon>Pseudomonadota</taxon>
        <taxon>Gammaproteobacteria</taxon>
        <taxon>Pseudomonadales</taxon>
        <taxon>Pseudomonadaceae</taxon>
        <taxon>Pseudomonas</taxon>
    </lineage>
</organism>
<comment type="function">
    <text evidence="1">This protein is involved in the repair of mismatches in DNA. It is possible that it carries out the mismatch recognition step. This protein has a weak ATPase activity.</text>
</comment>
<comment type="similarity">
    <text evidence="1">Belongs to the DNA mismatch repair MutS family.</text>
</comment>
<comment type="sequence caution" evidence="3">
    <conflict type="erroneous initiation">
        <sequence resource="EMBL-CDS" id="ABY97087"/>
    </conflict>
</comment>
<name>MUTS_PSEPG</name>
<sequence length="861" mass="95531">MNKAISDFTAHTPMMQQYWKLKNQHPDQLMFYRMGDFYEIFYEDAKKAAKLLDITLTARGQSAGQSIPMCGIPFHSLEGYLAKLVKLGESVVICEQIGDPATSKGPVERQVVRIITPGTVSDEALLDERRDNLIAALLGDERLFGLAVLDITSGNFSVQEIKGWENLLAELERLNPVELLIPDDWPRDLPAEKRPGARRRAPWDFDRDSARKALCQQFATKDLKGFGCDKLTLAIGAAGCLLTYAKETQRTALPHLRSLRHERLDDTVILDGASRRNLELDINLAGGRDNTLQSVIDRCQTAMASRLLSRWLNRPLRDLKVLQARQDSIRCLLDSYRFEKLQPQLKEIGDIERILARIGLRNARPRDLARLRDALGALPELQNAMTELEAPHLARLAAITGTYPELASLLERAIIDNPPAVIRDGGVLKAGYDNELDDLLAISENAGQFLIDLEAREKARTGLANLKVGYNRVHGYFIELPTKQAEQAPGDYIRRQTLKGAERFITPELKAFEDKALSAKSRALAREKMLYDALLETLISHLAPLQDSAAALAELDVLSNLAERALNLDLNCPRFVDEPCLRIVQGRHPVVEQVLTTPFVANDLGLDNSTRMLIITGPNMGGKSTYMRQTALIVLLAHIGSFVPAASCELSLVDRIFTRIGSSDDLAGGRSTFMVEMSETANILHNATDRSLVLMDEVGRGTSTFDGLSLAWAAAERLAQLRAYTLFATHYFELTVLPESEPLVANVHLNATEHNERIVFLHHVLPGPASQSYGLAVAQLAGVPTVVIQRAREHLGRLETTSLPHEQPPAAKAKDAPQVPHQSDLFASLPHPAIEKLGKLQLDDMTPRQAIEMLYQLKNLL</sequence>
<keyword id="KW-0067">ATP-binding</keyword>
<keyword id="KW-0227">DNA damage</keyword>
<keyword id="KW-0234">DNA repair</keyword>
<keyword id="KW-0238">DNA-binding</keyword>
<keyword id="KW-0547">Nucleotide-binding</keyword>
<feature type="chain" id="PRO_0000335204" description="DNA mismatch repair protein MutS">
    <location>
        <begin position="1"/>
        <end position="861"/>
    </location>
</feature>
<feature type="region of interest" description="Disordered" evidence="2">
    <location>
        <begin position="799"/>
        <end position="822"/>
    </location>
</feature>
<feature type="compositionally biased region" description="Low complexity" evidence="2">
    <location>
        <begin position="808"/>
        <end position="820"/>
    </location>
</feature>
<feature type="binding site" evidence="1">
    <location>
        <begin position="617"/>
        <end position="624"/>
    </location>
    <ligand>
        <name>ATP</name>
        <dbReference type="ChEBI" id="CHEBI:30616"/>
    </ligand>
</feature>
<evidence type="ECO:0000255" key="1">
    <source>
        <dbReference type="HAMAP-Rule" id="MF_00096"/>
    </source>
</evidence>
<evidence type="ECO:0000256" key="2">
    <source>
        <dbReference type="SAM" id="MobiDB-lite"/>
    </source>
</evidence>
<evidence type="ECO:0000305" key="3"/>
<dbReference type="EMBL" id="CP000926">
    <property type="protein sequence ID" value="ABY97087.1"/>
    <property type="status" value="ALT_INIT"/>
    <property type="molecule type" value="Genomic_DNA"/>
</dbReference>
<dbReference type="SMR" id="B0KSD2"/>
<dbReference type="KEGG" id="ppg:PputGB1_1179"/>
<dbReference type="eggNOG" id="COG0249">
    <property type="taxonomic scope" value="Bacteria"/>
</dbReference>
<dbReference type="HOGENOM" id="CLU_002472_4_0_6"/>
<dbReference type="Proteomes" id="UP000002157">
    <property type="component" value="Chromosome"/>
</dbReference>
<dbReference type="GO" id="GO:0005829">
    <property type="term" value="C:cytosol"/>
    <property type="evidence" value="ECO:0007669"/>
    <property type="project" value="TreeGrafter"/>
</dbReference>
<dbReference type="GO" id="GO:0005524">
    <property type="term" value="F:ATP binding"/>
    <property type="evidence" value="ECO:0007669"/>
    <property type="project" value="UniProtKB-UniRule"/>
</dbReference>
<dbReference type="GO" id="GO:0140664">
    <property type="term" value="F:ATP-dependent DNA damage sensor activity"/>
    <property type="evidence" value="ECO:0007669"/>
    <property type="project" value="InterPro"/>
</dbReference>
<dbReference type="GO" id="GO:0003684">
    <property type="term" value="F:damaged DNA binding"/>
    <property type="evidence" value="ECO:0007669"/>
    <property type="project" value="UniProtKB-UniRule"/>
</dbReference>
<dbReference type="GO" id="GO:0030983">
    <property type="term" value="F:mismatched DNA binding"/>
    <property type="evidence" value="ECO:0007669"/>
    <property type="project" value="InterPro"/>
</dbReference>
<dbReference type="GO" id="GO:0006298">
    <property type="term" value="P:mismatch repair"/>
    <property type="evidence" value="ECO:0007669"/>
    <property type="project" value="UniProtKB-UniRule"/>
</dbReference>
<dbReference type="CDD" id="cd03284">
    <property type="entry name" value="ABC_MutS1"/>
    <property type="match status" value="1"/>
</dbReference>
<dbReference type="FunFam" id="1.10.1420.10:FF:000002">
    <property type="entry name" value="DNA mismatch repair protein MutS"/>
    <property type="match status" value="1"/>
</dbReference>
<dbReference type="FunFam" id="3.40.1170.10:FF:000001">
    <property type="entry name" value="DNA mismatch repair protein MutS"/>
    <property type="match status" value="1"/>
</dbReference>
<dbReference type="FunFam" id="3.40.50.300:FF:000283">
    <property type="entry name" value="DNA mismatch repair protein MutS"/>
    <property type="match status" value="1"/>
</dbReference>
<dbReference type="Gene3D" id="1.10.1420.10">
    <property type="match status" value="2"/>
</dbReference>
<dbReference type="Gene3D" id="6.10.140.430">
    <property type="match status" value="1"/>
</dbReference>
<dbReference type="Gene3D" id="3.40.1170.10">
    <property type="entry name" value="DNA repair protein MutS, domain I"/>
    <property type="match status" value="1"/>
</dbReference>
<dbReference type="Gene3D" id="3.30.420.110">
    <property type="entry name" value="MutS, connector domain"/>
    <property type="match status" value="1"/>
</dbReference>
<dbReference type="Gene3D" id="3.40.50.300">
    <property type="entry name" value="P-loop containing nucleotide triphosphate hydrolases"/>
    <property type="match status" value="1"/>
</dbReference>
<dbReference type="HAMAP" id="MF_00096">
    <property type="entry name" value="MutS"/>
    <property type="match status" value="1"/>
</dbReference>
<dbReference type="InterPro" id="IPR005748">
    <property type="entry name" value="DNA_mismatch_repair_MutS"/>
</dbReference>
<dbReference type="InterPro" id="IPR007695">
    <property type="entry name" value="DNA_mismatch_repair_MutS-lik_N"/>
</dbReference>
<dbReference type="InterPro" id="IPR017261">
    <property type="entry name" value="DNA_mismatch_repair_MutS/MSH"/>
</dbReference>
<dbReference type="InterPro" id="IPR000432">
    <property type="entry name" value="DNA_mismatch_repair_MutS_C"/>
</dbReference>
<dbReference type="InterPro" id="IPR007861">
    <property type="entry name" value="DNA_mismatch_repair_MutS_clamp"/>
</dbReference>
<dbReference type="InterPro" id="IPR007696">
    <property type="entry name" value="DNA_mismatch_repair_MutS_core"/>
</dbReference>
<dbReference type="InterPro" id="IPR016151">
    <property type="entry name" value="DNA_mismatch_repair_MutS_N"/>
</dbReference>
<dbReference type="InterPro" id="IPR036187">
    <property type="entry name" value="DNA_mismatch_repair_MutS_sf"/>
</dbReference>
<dbReference type="InterPro" id="IPR007860">
    <property type="entry name" value="DNA_mmatch_repair_MutS_con_dom"/>
</dbReference>
<dbReference type="InterPro" id="IPR045076">
    <property type="entry name" value="MutS"/>
</dbReference>
<dbReference type="InterPro" id="IPR036678">
    <property type="entry name" value="MutS_con_dom_sf"/>
</dbReference>
<dbReference type="InterPro" id="IPR027417">
    <property type="entry name" value="P-loop_NTPase"/>
</dbReference>
<dbReference type="NCBIfam" id="TIGR01070">
    <property type="entry name" value="mutS1"/>
    <property type="match status" value="1"/>
</dbReference>
<dbReference type="NCBIfam" id="NF003810">
    <property type="entry name" value="PRK05399.1"/>
    <property type="match status" value="1"/>
</dbReference>
<dbReference type="PANTHER" id="PTHR11361:SF34">
    <property type="entry name" value="DNA MISMATCH REPAIR PROTEIN MSH1, MITOCHONDRIAL"/>
    <property type="match status" value="1"/>
</dbReference>
<dbReference type="PANTHER" id="PTHR11361">
    <property type="entry name" value="DNA MISMATCH REPAIR PROTEIN MUTS FAMILY MEMBER"/>
    <property type="match status" value="1"/>
</dbReference>
<dbReference type="Pfam" id="PF01624">
    <property type="entry name" value="MutS_I"/>
    <property type="match status" value="1"/>
</dbReference>
<dbReference type="Pfam" id="PF05188">
    <property type="entry name" value="MutS_II"/>
    <property type="match status" value="1"/>
</dbReference>
<dbReference type="Pfam" id="PF05192">
    <property type="entry name" value="MutS_III"/>
    <property type="match status" value="1"/>
</dbReference>
<dbReference type="Pfam" id="PF05190">
    <property type="entry name" value="MutS_IV"/>
    <property type="match status" value="1"/>
</dbReference>
<dbReference type="Pfam" id="PF00488">
    <property type="entry name" value="MutS_V"/>
    <property type="match status" value="1"/>
</dbReference>
<dbReference type="PIRSF" id="PIRSF037677">
    <property type="entry name" value="DNA_mis_repair_Msh6"/>
    <property type="match status" value="1"/>
</dbReference>
<dbReference type="SMART" id="SM00534">
    <property type="entry name" value="MUTSac"/>
    <property type="match status" value="1"/>
</dbReference>
<dbReference type="SMART" id="SM00533">
    <property type="entry name" value="MUTSd"/>
    <property type="match status" value="1"/>
</dbReference>
<dbReference type="SUPFAM" id="SSF55271">
    <property type="entry name" value="DNA repair protein MutS, domain I"/>
    <property type="match status" value="1"/>
</dbReference>
<dbReference type="SUPFAM" id="SSF53150">
    <property type="entry name" value="DNA repair protein MutS, domain II"/>
    <property type="match status" value="1"/>
</dbReference>
<dbReference type="SUPFAM" id="SSF48334">
    <property type="entry name" value="DNA repair protein MutS, domain III"/>
    <property type="match status" value="1"/>
</dbReference>
<dbReference type="SUPFAM" id="SSF52540">
    <property type="entry name" value="P-loop containing nucleoside triphosphate hydrolases"/>
    <property type="match status" value="1"/>
</dbReference>
<dbReference type="PROSITE" id="PS00486">
    <property type="entry name" value="DNA_MISMATCH_REPAIR_2"/>
    <property type="match status" value="1"/>
</dbReference>
<accession>B0KSD2</accession>
<protein>
    <recommendedName>
        <fullName evidence="1">DNA mismatch repair protein MutS</fullName>
    </recommendedName>
</protein>
<gene>
    <name evidence="1" type="primary">mutS</name>
    <name type="ordered locus">PputGB1_1179</name>
</gene>
<reference key="1">
    <citation type="submission" date="2008-01" db="EMBL/GenBank/DDBJ databases">
        <title>Complete sequence of Pseudomonas putida GB-1.</title>
        <authorList>
            <consortium name="US DOE Joint Genome Institute"/>
            <person name="Copeland A."/>
            <person name="Lucas S."/>
            <person name="Lapidus A."/>
            <person name="Barry K."/>
            <person name="Glavina del Rio T."/>
            <person name="Dalin E."/>
            <person name="Tice H."/>
            <person name="Pitluck S."/>
            <person name="Bruce D."/>
            <person name="Goodwin L."/>
            <person name="Chertkov O."/>
            <person name="Brettin T."/>
            <person name="Detter J.C."/>
            <person name="Han C."/>
            <person name="Kuske C.R."/>
            <person name="Schmutz J."/>
            <person name="Larimer F."/>
            <person name="Land M."/>
            <person name="Hauser L."/>
            <person name="Kyrpides N."/>
            <person name="Kim E."/>
            <person name="McCarthy J.K."/>
            <person name="Richardson P."/>
        </authorList>
    </citation>
    <scope>NUCLEOTIDE SEQUENCE [LARGE SCALE GENOMIC DNA]</scope>
    <source>
        <strain>GB-1</strain>
    </source>
</reference>